<reference key="1">
    <citation type="journal article" date="2004" name="Genome Res.">
        <title>The status, quality, and expansion of the NIH full-length cDNA project: the Mammalian Gene Collection (MGC).</title>
        <authorList>
            <consortium name="The MGC Project Team"/>
        </authorList>
    </citation>
    <scope>NUCLEOTIDE SEQUENCE [LARGE SCALE MRNA]</scope>
    <source>
        <tissue>Muscle</tissue>
    </source>
</reference>
<reference key="2">
    <citation type="journal article" date="2005" name="Biochem. Biophys. Res. Commun.">
        <title>A novel six-transmembrane protein hhole functions as a suppressor in MAPK signaling pathways.</title>
        <authorList>
            <person name="Zhou J."/>
            <person name="Li Y."/>
            <person name="Liang P."/>
            <person name="Yuan W."/>
            <person name="Ye X."/>
            <person name="Zhu C."/>
            <person name="Cheng Y."/>
            <person name="Wang Y."/>
            <person name="Li G."/>
            <person name="Wu X."/>
            <person name="Liu M."/>
        </authorList>
    </citation>
    <scope>IDENTIFICATION</scope>
    <scope>FUNCTION</scope>
    <scope>SUBCELLULAR LOCATION</scope>
    <scope>TISSUE SPECIFICITY</scope>
    <scope>DEVELOPMENTAL STAGE</scope>
</reference>
<dbReference type="EMBL" id="BC004221">
    <property type="protein sequence ID" value="AAH04221.1"/>
    <property type="molecule type" value="mRNA"/>
</dbReference>
<dbReference type="CCDS" id="CCDS10006.1"/>
<dbReference type="RefSeq" id="NP_001318167.1">
    <property type="nucleotide sequence ID" value="NM_001331238.2"/>
</dbReference>
<dbReference type="RefSeq" id="NP_079544.1">
    <property type="nucleotide sequence ID" value="NM_025268.4"/>
</dbReference>
<dbReference type="RefSeq" id="XP_006720324.1">
    <property type="nucleotide sequence ID" value="XM_006720261.3"/>
</dbReference>
<dbReference type="BioGRID" id="123291">
    <property type="interactions" value="15"/>
</dbReference>
<dbReference type="FunCoup" id="Q9BTD3">
    <property type="interactions" value="19"/>
</dbReference>
<dbReference type="IntAct" id="Q9BTD3">
    <property type="interactions" value="14"/>
</dbReference>
<dbReference type="STRING" id="9606.ENSP00000376304"/>
<dbReference type="iPTMnet" id="Q9BTD3"/>
<dbReference type="PhosphoSitePlus" id="Q9BTD3"/>
<dbReference type="BioMuta" id="TMEM121"/>
<dbReference type="DMDM" id="74733114"/>
<dbReference type="MassIVE" id="Q9BTD3"/>
<dbReference type="PaxDb" id="9606-ENSP00000376304"/>
<dbReference type="PeptideAtlas" id="Q9BTD3"/>
<dbReference type="ProteomicsDB" id="78974"/>
<dbReference type="Antibodypedia" id="62348">
    <property type="antibodies" value="17 antibodies from 9 providers"/>
</dbReference>
<dbReference type="DNASU" id="80757"/>
<dbReference type="Ensembl" id="ENST00000392519.7">
    <property type="protein sequence ID" value="ENSP00000376304.2"/>
    <property type="gene ID" value="ENSG00000184986.12"/>
</dbReference>
<dbReference type="GeneID" id="80757"/>
<dbReference type="KEGG" id="hsa:80757"/>
<dbReference type="MANE-Select" id="ENST00000392519.7">
    <property type="protein sequence ID" value="ENSP00000376304.2"/>
    <property type="RefSeq nucleotide sequence ID" value="NM_025268.4"/>
    <property type="RefSeq protein sequence ID" value="NP_079544.1"/>
</dbReference>
<dbReference type="UCSC" id="uc001yrp.2">
    <property type="organism name" value="human"/>
</dbReference>
<dbReference type="AGR" id="HGNC:20511"/>
<dbReference type="CTD" id="80757"/>
<dbReference type="DisGeNET" id="80757"/>
<dbReference type="GeneCards" id="TMEM121"/>
<dbReference type="HGNC" id="HGNC:20511">
    <property type="gene designation" value="TMEM121"/>
</dbReference>
<dbReference type="HPA" id="ENSG00000184986">
    <property type="expression patterns" value="Tissue enhanced (brain)"/>
</dbReference>
<dbReference type="neXtProt" id="NX_Q9BTD3"/>
<dbReference type="OpenTargets" id="ENSG00000184986"/>
<dbReference type="PharmGKB" id="PA143485641"/>
<dbReference type="VEuPathDB" id="HostDB:ENSG00000184986"/>
<dbReference type="eggNOG" id="ENOG502S0WC">
    <property type="taxonomic scope" value="Eukaryota"/>
</dbReference>
<dbReference type="GeneTree" id="ENSGT00390000003866"/>
<dbReference type="HOGENOM" id="CLU_076106_0_0_1"/>
<dbReference type="InParanoid" id="Q9BTD3"/>
<dbReference type="OMA" id="QATLWEP"/>
<dbReference type="OrthoDB" id="9926693at2759"/>
<dbReference type="PAN-GO" id="Q9BTD3">
    <property type="GO annotations" value="0 GO annotations based on evolutionary models"/>
</dbReference>
<dbReference type="PhylomeDB" id="Q9BTD3"/>
<dbReference type="TreeFam" id="TF328726"/>
<dbReference type="PathwayCommons" id="Q9BTD3"/>
<dbReference type="SignaLink" id="Q9BTD3"/>
<dbReference type="BioGRID-ORCS" id="80757">
    <property type="hits" value="13 hits in 1151 CRISPR screens"/>
</dbReference>
<dbReference type="ChiTaRS" id="TMEM121">
    <property type="organism name" value="human"/>
</dbReference>
<dbReference type="GenomeRNAi" id="80757"/>
<dbReference type="Pharos" id="Q9BTD3">
    <property type="development level" value="Tdark"/>
</dbReference>
<dbReference type="PRO" id="PR:Q9BTD3"/>
<dbReference type="Proteomes" id="UP000005640">
    <property type="component" value="Chromosome 14"/>
</dbReference>
<dbReference type="RNAct" id="Q9BTD3">
    <property type="molecule type" value="protein"/>
</dbReference>
<dbReference type="Bgee" id="ENSG00000184986">
    <property type="expression patterns" value="Expressed in right frontal lobe and 103 other cell types or tissues"/>
</dbReference>
<dbReference type="GO" id="GO:0016020">
    <property type="term" value="C:membrane"/>
    <property type="evidence" value="ECO:0007669"/>
    <property type="project" value="UniProtKB-SubCell"/>
</dbReference>
<dbReference type="InterPro" id="IPR032776">
    <property type="entry name" value="CECR6/TMEM121"/>
</dbReference>
<dbReference type="InterPro" id="IPR042314">
    <property type="entry name" value="TMEM121"/>
</dbReference>
<dbReference type="PANTHER" id="PTHR31046">
    <property type="entry name" value="TRANSMEMBRANE PROTEIN 121"/>
    <property type="match status" value="1"/>
</dbReference>
<dbReference type="PANTHER" id="PTHR31046:SF0">
    <property type="entry name" value="TRANSMEMBRANE PROTEIN 121"/>
    <property type="match status" value="1"/>
</dbReference>
<dbReference type="Pfam" id="PF14997">
    <property type="entry name" value="CECR6_TMEM121"/>
    <property type="match status" value="1"/>
</dbReference>
<protein>
    <recommendedName>
        <fullName>Transmembrane protein 121</fullName>
    </recommendedName>
</protein>
<organism>
    <name type="scientific">Homo sapiens</name>
    <name type="common">Human</name>
    <dbReference type="NCBI Taxonomy" id="9606"/>
    <lineage>
        <taxon>Eukaryota</taxon>
        <taxon>Metazoa</taxon>
        <taxon>Chordata</taxon>
        <taxon>Craniata</taxon>
        <taxon>Vertebrata</taxon>
        <taxon>Euteleostomi</taxon>
        <taxon>Mammalia</taxon>
        <taxon>Eutheria</taxon>
        <taxon>Euarchontoglires</taxon>
        <taxon>Primates</taxon>
        <taxon>Haplorrhini</taxon>
        <taxon>Catarrhini</taxon>
        <taxon>Hominidae</taxon>
        <taxon>Homo</taxon>
    </lineage>
</organism>
<keyword id="KW-0472">Membrane</keyword>
<keyword id="KW-1185">Reference proteome</keyword>
<keyword id="KW-0812">Transmembrane</keyword>
<keyword id="KW-1133">Transmembrane helix</keyword>
<feature type="chain" id="PRO_0000251245" description="Transmembrane protein 121">
    <location>
        <begin position="1"/>
        <end position="319"/>
    </location>
</feature>
<feature type="transmembrane region" description="Helical" evidence="1">
    <location>
        <begin position="10"/>
        <end position="30"/>
    </location>
</feature>
<feature type="transmembrane region" description="Helical" evidence="1">
    <location>
        <begin position="43"/>
        <end position="63"/>
    </location>
</feature>
<feature type="transmembrane region" description="Helical" evidence="1">
    <location>
        <begin position="74"/>
        <end position="94"/>
    </location>
</feature>
<feature type="transmembrane region" description="Helical" evidence="1">
    <location>
        <begin position="112"/>
        <end position="132"/>
    </location>
</feature>
<feature type="transmembrane region" description="Helical" evidence="1">
    <location>
        <begin position="150"/>
        <end position="170"/>
    </location>
</feature>
<feature type="transmembrane region" description="Helical" evidence="1">
    <location>
        <begin position="174"/>
        <end position="194"/>
    </location>
</feature>
<feature type="transmembrane region" description="Helical" evidence="1">
    <location>
        <begin position="214"/>
        <end position="234"/>
    </location>
</feature>
<feature type="region of interest" description="Disordered" evidence="2">
    <location>
        <begin position="277"/>
        <end position="319"/>
    </location>
</feature>
<feature type="compositionally biased region" description="Pro residues" evidence="2">
    <location>
        <begin position="277"/>
        <end position="306"/>
    </location>
</feature>
<sequence>MVLPPPDRRHVCLTTLVIMGSMAVMDAYLVEQNQGPRKIGVCIIVLVGDVCFLLVLRYVAVWVGAEVRTAKRGYAMILWFLYIFVLEIKLYFIFQNYKAARRGAADPVARKALTLLLSVCVPGLFLLLVALDRMEYVRTFRKREDLRGRLFWVALDLLDLLDMQASLWEPPRSGLPLWAEGLTFFYCYMLLLVLPCVALSEVSMQGEHIAPQKMMLYPVLSLATVNVVAVLARAANMALFRDSRVSAIFVGKNVVALATKACTFLEYRRQVRDFPPPALSLELQPPPPQRNSVPPPPPPLHGPPGRPHMSSPTRDPLDT</sequence>
<gene>
    <name type="primary">TMEM121</name>
    <name type="synonym">HHOLE</name>
</gene>
<evidence type="ECO:0000255" key="1"/>
<evidence type="ECO:0000256" key="2">
    <source>
        <dbReference type="SAM" id="MobiDB-lite"/>
    </source>
</evidence>
<evidence type="ECO:0000269" key="3">
    <source>
    </source>
</evidence>
<evidence type="ECO:0000305" key="4"/>
<proteinExistence type="evidence at protein level"/>
<name>TM121_HUMAN</name>
<comment type="function">
    <text evidence="3">May play a role in MAPK signaling.</text>
</comment>
<comment type="interaction">
    <interactant intactId="EBI-12155101">
        <id>Q9BTD3</id>
    </interactant>
    <interactant intactId="EBI-77613">
        <id>P05067</id>
        <label>APP</label>
    </interactant>
    <organismsDiffer>false</organismsDiffer>
    <experiments>3</experiments>
</comment>
<comment type="interaction">
    <interactant intactId="EBI-12155101">
        <id>Q9BTD3</id>
    </interactant>
    <interactant intactId="EBI-11343438">
        <id>Q3SXY8</id>
        <label>ARL13B</label>
    </interactant>
    <organismsDiffer>false</organismsDiffer>
    <experiments>3</experiments>
</comment>
<comment type="interaction">
    <interactant intactId="EBI-12155101">
        <id>Q9BTD3</id>
    </interactant>
    <interactant intactId="EBI-2339219">
        <id>Q08426</id>
        <label>EHHADH</label>
    </interactant>
    <organismsDiffer>false</organismsDiffer>
    <experiments>3</experiments>
</comment>
<comment type="interaction">
    <interactant intactId="EBI-12155101">
        <id>Q9BTD3</id>
    </interactant>
    <interactant intactId="EBI-17458373">
        <id>P48165</id>
        <label>GJA8</label>
    </interactant>
    <organismsDiffer>false</organismsDiffer>
    <experiments>3</experiments>
</comment>
<comment type="interaction">
    <interactant intactId="EBI-12155101">
        <id>Q9BTD3</id>
    </interactant>
    <interactant intactId="EBI-11742507">
        <id>Q8TAP4-4</id>
        <label>LMO3</label>
    </interactant>
    <organismsDiffer>false</organismsDiffer>
    <experiments>3</experiments>
</comment>
<comment type="interaction">
    <interactant intactId="EBI-12155101">
        <id>Q9BTD3</id>
    </interactant>
    <interactant intactId="EBI-17263240">
        <id>P15941-11</id>
        <label>MUC1</label>
    </interactant>
    <organismsDiffer>false</organismsDiffer>
    <experiments>3</experiments>
</comment>
<comment type="interaction">
    <interactant intactId="EBI-12155101">
        <id>Q9BTD3</id>
    </interactant>
    <interactant intactId="EBI-713635">
        <id>O43639</id>
        <label>NCK2</label>
    </interactant>
    <organismsDiffer>false</organismsDiffer>
    <experiments>3</experiments>
</comment>
<comment type="interaction">
    <interactant intactId="EBI-12155101">
        <id>Q9BTD3</id>
    </interactant>
    <interactant intactId="EBI-1055079">
        <id>O15160</id>
        <label>POLR1C</label>
    </interactant>
    <organismsDiffer>false</organismsDiffer>
    <experiments>3</experiments>
</comment>
<comment type="interaction">
    <interactant intactId="EBI-12155101">
        <id>Q9BTD3</id>
    </interactant>
    <interactant intactId="EBI-7545592">
        <id>Q9H6H4</id>
        <label>REEP4</label>
    </interactant>
    <organismsDiffer>false</organismsDiffer>
    <experiments>3</experiments>
</comment>
<comment type="interaction">
    <interactant intactId="EBI-12155101">
        <id>Q9BTD3</id>
    </interactant>
    <interactant intactId="EBI-3923031">
        <id>Q14973</id>
        <label>SLC10A1</label>
    </interactant>
    <organismsDiffer>false</organismsDiffer>
    <experiments>3</experiments>
</comment>
<comment type="interaction">
    <interactant intactId="EBI-12155101">
        <id>Q9BTD3</id>
    </interactant>
    <interactant intactId="EBI-11603430">
        <id>Q6PL24</id>
        <label>TMED8</label>
    </interactant>
    <organismsDiffer>false</organismsDiffer>
    <experiments>3</experiments>
</comment>
<comment type="interaction">
    <interactant intactId="EBI-12155101">
        <id>Q9BTD3</id>
    </interactant>
    <interactant intactId="EBI-8638294">
        <id>Q9NUH8</id>
        <label>TMEM14B</label>
    </interactant>
    <organismsDiffer>false</organismsDiffer>
    <experiments>3</experiments>
</comment>
<comment type="interaction">
    <interactant intactId="EBI-12155101">
        <id>Q9BTD3</id>
    </interactant>
    <interactant intactId="EBI-6447886">
        <id>Q9Y320</id>
        <label>TMX2</label>
    </interactant>
    <organismsDiffer>false</organismsDiffer>
    <experiments>3</experiments>
</comment>
<comment type="interaction">
    <interactant intactId="EBI-12155101">
        <id>Q9BTD3</id>
    </interactant>
    <interactant intactId="EBI-744471">
        <id>O43167</id>
        <label>ZBTB24</label>
    </interactant>
    <organismsDiffer>false</organismsDiffer>
    <experiments>3</experiments>
</comment>
<comment type="subcellular location">
    <subcellularLocation>
        <location evidence="4">Membrane</location>
        <topology evidence="4">Multi-pass membrane protein</topology>
    </subcellularLocation>
    <text evidence="3">May localize to the plasma membrane.</text>
</comment>
<comment type="tissue specificity">
    <text evidence="3">Highly expressed in heart and detected in pancreas, liver and skeletal muscle.</text>
</comment>
<comment type="developmental stage">
    <text evidence="3">Widely expressed in fetal tissues with high expression in fetal heart.</text>
</comment>
<comment type="similarity">
    <text evidence="4">Belongs to the TMEM121 family.</text>
</comment>
<accession>Q9BTD3</accession>